<feature type="chain" id="PRO_0000178827" description="Lipoprotein signal peptidase">
    <location>
        <begin position="1"/>
        <end position="161"/>
    </location>
</feature>
<feature type="transmembrane region" description="Helical" evidence="1">
    <location>
        <begin position="11"/>
        <end position="31"/>
    </location>
</feature>
<feature type="transmembrane region" description="Helical" evidence="1">
    <location>
        <begin position="44"/>
        <end position="64"/>
    </location>
</feature>
<feature type="transmembrane region" description="Helical" evidence="1">
    <location>
        <begin position="66"/>
        <end position="86"/>
    </location>
</feature>
<feature type="transmembrane region" description="Helical" evidence="1">
    <location>
        <begin position="100"/>
        <end position="120"/>
    </location>
</feature>
<feature type="transmembrane region" description="Helical" evidence="1">
    <location>
        <begin position="135"/>
        <end position="155"/>
    </location>
</feature>
<feature type="active site" evidence="1">
    <location>
        <position position="121"/>
    </location>
</feature>
<feature type="active site" evidence="1">
    <location>
        <position position="137"/>
    </location>
</feature>
<dbReference type="EC" id="3.4.23.36" evidence="1"/>
<dbReference type="EMBL" id="BA000022">
    <property type="protein sequence ID" value="BAA17580.1"/>
    <property type="molecule type" value="Genomic_DNA"/>
</dbReference>
<dbReference type="PIR" id="S77246">
    <property type="entry name" value="S77246"/>
</dbReference>
<dbReference type="SMR" id="P73540"/>
<dbReference type="FunCoup" id="P73540">
    <property type="interactions" value="356"/>
</dbReference>
<dbReference type="STRING" id="1148.gene:10498447"/>
<dbReference type="PaxDb" id="1148-1652660"/>
<dbReference type="EnsemblBacteria" id="BAA17580">
    <property type="protein sequence ID" value="BAA17580"/>
    <property type="gene ID" value="BAA17580"/>
</dbReference>
<dbReference type="KEGG" id="syn:slr1366"/>
<dbReference type="eggNOG" id="COG0597">
    <property type="taxonomic scope" value="Bacteria"/>
</dbReference>
<dbReference type="InParanoid" id="P73540"/>
<dbReference type="PhylomeDB" id="P73540"/>
<dbReference type="UniPathway" id="UPA00665"/>
<dbReference type="Proteomes" id="UP000001425">
    <property type="component" value="Chromosome"/>
</dbReference>
<dbReference type="GO" id="GO:0005886">
    <property type="term" value="C:plasma membrane"/>
    <property type="evidence" value="ECO:0000318"/>
    <property type="project" value="GO_Central"/>
</dbReference>
<dbReference type="GO" id="GO:0004190">
    <property type="term" value="F:aspartic-type endopeptidase activity"/>
    <property type="evidence" value="ECO:0007669"/>
    <property type="project" value="UniProtKB-UniRule"/>
</dbReference>
<dbReference type="GO" id="GO:0004175">
    <property type="term" value="F:endopeptidase activity"/>
    <property type="evidence" value="ECO:0000318"/>
    <property type="project" value="GO_Central"/>
</dbReference>
<dbReference type="GO" id="GO:0006508">
    <property type="term" value="P:proteolysis"/>
    <property type="evidence" value="ECO:0007669"/>
    <property type="project" value="UniProtKB-KW"/>
</dbReference>
<dbReference type="HAMAP" id="MF_00161">
    <property type="entry name" value="LspA"/>
    <property type="match status" value="1"/>
</dbReference>
<dbReference type="InterPro" id="IPR001872">
    <property type="entry name" value="Peptidase_A8"/>
</dbReference>
<dbReference type="NCBIfam" id="TIGR00077">
    <property type="entry name" value="lspA"/>
    <property type="match status" value="1"/>
</dbReference>
<dbReference type="PANTHER" id="PTHR33695">
    <property type="entry name" value="LIPOPROTEIN SIGNAL PEPTIDASE"/>
    <property type="match status" value="1"/>
</dbReference>
<dbReference type="PANTHER" id="PTHR33695:SF1">
    <property type="entry name" value="LIPOPROTEIN SIGNAL PEPTIDASE"/>
    <property type="match status" value="1"/>
</dbReference>
<dbReference type="Pfam" id="PF01252">
    <property type="entry name" value="Peptidase_A8"/>
    <property type="match status" value="1"/>
</dbReference>
<dbReference type="PRINTS" id="PR00781">
    <property type="entry name" value="LIPOSIGPTASE"/>
</dbReference>
<dbReference type="PROSITE" id="PS00855">
    <property type="entry name" value="SPASE_II"/>
    <property type="match status" value="1"/>
</dbReference>
<reference key="1">
    <citation type="journal article" date="1996" name="DNA Res.">
        <title>Sequence analysis of the genome of the unicellular cyanobacterium Synechocystis sp. strain PCC6803. II. Sequence determination of the entire genome and assignment of potential protein-coding regions.</title>
        <authorList>
            <person name="Kaneko T."/>
            <person name="Sato S."/>
            <person name="Kotani H."/>
            <person name="Tanaka A."/>
            <person name="Asamizu E."/>
            <person name="Nakamura Y."/>
            <person name="Miyajima N."/>
            <person name="Hirosawa M."/>
            <person name="Sugiura M."/>
            <person name="Sasamoto S."/>
            <person name="Kimura T."/>
            <person name="Hosouchi T."/>
            <person name="Matsuno A."/>
            <person name="Muraki A."/>
            <person name="Nakazaki N."/>
            <person name="Naruo K."/>
            <person name="Okumura S."/>
            <person name="Shimpo S."/>
            <person name="Takeuchi C."/>
            <person name="Wada T."/>
            <person name="Watanabe A."/>
            <person name="Yamada M."/>
            <person name="Yasuda M."/>
            <person name="Tabata S."/>
        </authorList>
    </citation>
    <scope>NUCLEOTIDE SEQUENCE [LARGE SCALE GENOMIC DNA]</scope>
    <source>
        <strain>ATCC 27184 / PCC 6803 / Kazusa</strain>
    </source>
</reference>
<sequence>MARSFSLAKNPLFWQVAIAGIILDQLSKLWVSQAMDPVGTTWPLWSGVFHFTYVLNTGAAFSAFRGGAGWLKWLSLAVSVGLIIFAGKVPLRKLEQLGYGCILAGAVGNGIDRFLFGHVIDFLDFRLINFPIFNLADVSINIGIAALLWASFFPVSSRKVD</sequence>
<protein>
    <recommendedName>
        <fullName evidence="1">Lipoprotein signal peptidase</fullName>
        <ecNumber evidence="1">3.4.23.36</ecNumber>
    </recommendedName>
    <alternativeName>
        <fullName evidence="1">Prolipoprotein signal peptidase</fullName>
    </alternativeName>
    <alternativeName>
        <fullName evidence="1">Signal peptidase II</fullName>
        <shortName evidence="1">SPase II</shortName>
    </alternativeName>
</protein>
<organism>
    <name type="scientific">Synechocystis sp. (strain ATCC 27184 / PCC 6803 / Kazusa)</name>
    <dbReference type="NCBI Taxonomy" id="1111708"/>
    <lineage>
        <taxon>Bacteria</taxon>
        <taxon>Bacillati</taxon>
        <taxon>Cyanobacteriota</taxon>
        <taxon>Cyanophyceae</taxon>
        <taxon>Synechococcales</taxon>
        <taxon>Merismopediaceae</taxon>
        <taxon>Synechocystis</taxon>
    </lineage>
</organism>
<proteinExistence type="inferred from homology"/>
<evidence type="ECO:0000255" key="1">
    <source>
        <dbReference type="HAMAP-Rule" id="MF_00161"/>
    </source>
</evidence>
<evidence type="ECO:0000305" key="2"/>
<name>LSPA_SYNY3</name>
<gene>
    <name evidence="1" type="primary">lspA</name>
    <name type="ordered locus">slr1366</name>
</gene>
<accession>P73540</accession>
<keyword id="KW-0064">Aspartyl protease</keyword>
<keyword id="KW-0997">Cell inner membrane</keyword>
<keyword id="KW-1003">Cell membrane</keyword>
<keyword id="KW-0378">Hydrolase</keyword>
<keyword id="KW-0472">Membrane</keyword>
<keyword id="KW-0645">Protease</keyword>
<keyword id="KW-1185">Reference proteome</keyword>
<keyword id="KW-0812">Transmembrane</keyword>
<keyword id="KW-1133">Transmembrane helix</keyword>
<comment type="function">
    <text evidence="1">This protein specifically catalyzes the removal of signal peptides from prolipoproteins.</text>
</comment>
<comment type="catalytic activity">
    <reaction evidence="1">
        <text>Release of signal peptides from bacterial membrane prolipoproteins. Hydrolyzes -Xaa-Yaa-Zaa-|-(S,diacylglyceryl)Cys-, in which Xaa is hydrophobic (preferably Leu), and Yaa (Ala or Ser) and Zaa (Gly or Ala) have small, neutral side chains.</text>
        <dbReference type="EC" id="3.4.23.36"/>
    </reaction>
</comment>
<comment type="pathway">
    <text evidence="1">Protein modification; lipoprotein biosynthesis (signal peptide cleavage).</text>
</comment>
<comment type="subcellular location">
    <subcellularLocation>
        <location evidence="1">Cell inner membrane</location>
        <topology evidence="1">Multi-pass membrane protein</topology>
    </subcellularLocation>
</comment>
<comment type="similarity">
    <text evidence="1 2">Belongs to the peptidase A8 family.</text>
</comment>